<comment type="function">
    <text evidence="1">The SPT4-SPT5 complex mediates both activation and inhibition of transcription elongation, and plays a role in pre-mRNA processing. This complex seems to be important for the stability of the RNA polymerase II elongation machinery on the chromatin template but not for the inherent ability of this machinery to translocate down the gene (By similarity).</text>
</comment>
<comment type="subunit">
    <text evidence="1">Component of the SPT4-SPT5 complex. Interacts with RNA polymerase II (By similarity).</text>
</comment>
<comment type="subcellular location">
    <subcellularLocation>
        <location>Nucleus</location>
    </subcellularLocation>
    <subcellularLocation>
        <location evidence="1">Chromosome</location>
        <location evidence="1">Centromere</location>
    </subcellularLocation>
    <text evidence="1">Centromere and heterochromatin.</text>
</comment>
<comment type="similarity">
    <text evidence="3">Belongs to the SPT4 family.</text>
</comment>
<accession>Q6FMX1</accession>
<protein>
    <recommendedName>
        <fullName>Transcription elongation factor SPT4</fullName>
    </recommendedName>
    <alternativeName>
        <fullName>Chromatin elongation factor SPT4</fullName>
    </alternativeName>
</protein>
<dbReference type="EMBL" id="CR380957">
    <property type="protein sequence ID" value="CAG61384.1"/>
    <property type="molecule type" value="Genomic_DNA"/>
</dbReference>
<dbReference type="RefSeq" id="XP_448423.1">
    <property type="nucleotide sequence ID" value="XM_448423.1"/>
</dbReference>
<dbReference type="SMR" id="Q6FMX1"/>
<dbReference type="FunCoup" id="Q6FMX1">
    <property type="interactions" value="484"/>
</dbReference>
<dbReference type="STRING" id="284593.Q6FMX1"/>
<dbReference type="EnsemblFungi" id="CAGL0K04543g-T">
    <property type="protein sequence ID" value="CAGL0K04543g-T-p1"/>
    <property type="gene ID" value="CAGL0K04543g"/>
</dbReference>
<dbReference type="KEGG" id="cgr:2890002"/>
<dbReference type="CGD" id="CAL0134725">
    <property type="gene designation" value="CAGL0K04543g"/>
</dbReference>
<dbReference type="VEuPathDB" id="FungiDB:B1J91_K04543g"/>
<dbReference type="VEuPathDB" id="FungiDB:CAGL0K04543g"/>
<dbReference type="eggNOG" id="KOG3490">
    <property type="taxonomic scope" value="Eukaryota"/>
</dbReference>
<dbReference type="HOGENOM" id="CLU_138052_2_1_1"/>
<dbReference type="InParanoid" id="Q6FMX1"/>
<dbReference type="OMA" id="FDGMIAV"/>
<dbReference type="Proteomes" id="UP000002428">
    <property type="component" value="Chromosome K"/>
</dbReference>
<dbReference type="GO" id="GO:0032044">
    <property type="term" value="C:DSIF complex"/>
    <property type="evidence" value="ECO:0007669"/>
    <property type="project" value="EnsemblFungi"/>
</dbReference>
<dbReference type="GO" id="GO:0000776">
    <property type="term" value="C:kinetochore"/>
    <property type="evidence" value="ECO:0007669"/>
    <property type="project" value="EnsemblFungi"/>
</dbReference>
<dbReference type="GO" id="GO:0031934">
    <property type="term" value="C:mating-type region heterochromatin"/>
    <property type="evidence" value="ECO:0007669"/>
    <property type="project" value="EnsemblFungi"/>
</dbReference>
<dbReference type="GO" id="GO:0033553">
    <property type="term" value="C:rDNA heterochromatin"/>
    <property type="evidence" value="ECO:0007669"/>
    <property type="project" value="EnsemblFungi"/>
</dbReference>
<dbReference type="GO" id="GO:0044877">
    <property type="term" value="F:protein-containing complex binding"/>
    <property type="evidence" value="ECO:0007669"/>
    <property type="project" value="EnsemblFungi"/>
</dbReference>
<dbReference type="GO" id="GO:0000182">
    <property type="term" value="F:rDNA binding"/>
    <property type="evidence" value="ECO:0007669"/>
    <property type="project" value="EnsemblFungi"/>
</dbReference>
<dbReference type="GO" id="GO:0000993">
    <property type="term" value="F:RNA polymerase II complex binding"/>
    <property type="evidence" value="ECO:0007669"/>
    <property type="project" value="EnsemblFungi"/>
</dbReference>
<dbReference type="GO" id="GO:0003727">
    <property type="term" value="F:single-stranded RNA binding"/>
    <property type="evidence" value="ECO:0007669"/>
    <property type="project" value="EnsemblFungi"/>
</dbReference>
<dbReference type="GO" id="GO:0008270">
    <property type="term" value="F:zinc ion binding"/>
    <property type="evidence" value="ECO:0007669"/>
    <property type="project" value="UniProtKB-KW"/>
</dbReference>
<dbReference type="GO" id="GO:0006370">
    <property type="term" value="P:7-methylguanosine mRNA capping"/>
    <property type="evidence" value="ECO:0007669"/>
    <property type="project" value="EnsemblFungi"/>
</dbReference>
<dbReference type="GO" id="GO:0031507">
    <property type="term" value="P:heterochromatin formation"/>
    <property type="evidence" value="ECO:0007669"/>
    <property type="project" value="EnsemblFungi"/>
</dbReference>
<dbReference type="GO" id="GO:0008298">
    <property type="term" value="P:intracellular mRNA localization"/>
    <property type="evidence" value="ECO:0007669"/>
    <property type="project" value="EnsemblFungi"/>
</dbReference>
<dbReference type="GO" id="GO:0010507">
    <property type="term" value="P:negative regulation of autophagy"/>
    <property type="evidence" value="ECO:0007669"/>
    <property type="project" value="EnsemblFungi"/>
</dbReference>
<dbReference type="GO" id="GO:2001208">
    <property type="term" value="P:negative regulation of transcription elongation by RNA polymerase I"/>
    <property type="evidence" value="ECO:0007669"/>
    <property type="project" value="EnsemblFungi"/>
</dbReference>
<dbReference type="GO" id="GO:2001209">
    <property type="term" value="P:positive regulation of transcription elongation by RNA polymerase I"/>
    <property type="evidence" value="ECO:0007669"/>
    <property type="project" value="EnsemblFungi"/>
</dbReference>
<dbReference type="GO" id="GO:0032968">
    <property type="term" value="P:positive regulation of transcription elongation by RNA polymerase II"/>
    <property type="evidence" value="ECO:0007669"/>
    <property type="project" value="EnsemblFungi"/>
</dbReference>
<dbReference type="GO" id="GO:2000232">
    <property type="term" value="P:regulation of rRNA processing"/>
    <property type="evidence" value="ECO:0007669"/>
    <property type="project" value="EnsemblFungi"/>
</dbReference>
<dbReference type="GO" id="GO:0090262">
    <property type="term" value="P:regulation of transcription-coupled nucleotide-excision repair"/>
    <property type="evidence" value="ECO:0007669"/>
    <property type="project" value="EnsemblFungi"/>
</dbReference>
<dbReference type="GO" id="GO:0140673">
    <property type="term" value="P:transcription elongation-coupled chromatin remodeling"/>
    <property type="evidence" value="ECO:0007669"/>
    <property type="project" value="InterPro"/>
</dbReference>
<dbReference type="CDD" id="cd07973">
    <property type="entry name" value="Spt4"/>
    <property type="match status" value="1"/>
</dbReference>
<dbReference type="FunFam" id="3.30.40.210:FF:000003">
    <property type="entry name" value="Transcription elongation factor SPT4"/>
    <property type="match status" value="1"/>
</dbReference>
<dbReference type="Gene3D" id="3.30.40.210">
    <property type="match status" value="1"/>
</dbReference>
<dbReference type="InterPro" id="IPR029040">
    <property type="entry name" value="RPABC4/Spt4"/>
</dbReference>
<dbReference type="InterPro" id="IPR009287">
    <property type="entry name" value="Spt4"/>
</dbReference>
<dbReference type="InterPro" id="IPR022800">
    <property type="entry name" value="Spt4/RpoE2_Znf"/>
</dbReference>
<dbReference type="InterPro" id="IPR038510">
    <property type="entry name" value="Spt4_sf"/>
</dbReference>
<dbReference type="PANTHER" id="PTHR12882">
    <property type="entry name" value="SUPPRESSOR OF TY 4"/>
    <property type="match status" value="1"/>
</dbReference>
<dbReference type="PANTHER" id="PTHR12882:SF1">
    <property type="entry name" value="TRANSCRIPTION ELONGATION FACTOR SPT4"/>
    <property type="match status" value="1"/>
</dbReference>
<dbReference type="Pfam" id="PF06093">
    <property type="entry name" value="Spt4"/>
    <property type="match status" value="1"/>
</dbReference>
<dbReference type="PIRSF" id="PIRSF025023">
    <property type="entry name" value="Spt4"/>
    <property type="match status" value="1"/>
</dbReference>
<dbReference type="SMART" id="SM01389">
    <property type="entry name" value="Spt4"/>
    <property type="match status" value="1"/>
</dbReference>
<dbReference type="SUPFAM" id="SSF63393">
    <property type="entry name" value="RNA polymerase subunits"/>
    <property type="match status" value="1"/>
</dbReference>
<reference key="1">
    <citation type="journal article" date="2004" name="Nature">
        <title>Genome evolution in yeasts.</title>
        <authorList>
            <person name="Dujon B."/>
            <person name="Sherman D."/>
            <person name="Fischer G."/>
            <person name="Durrens P."/>
            <person name="Casaregola S."/>
            <person name="Lafontaine I."/>
            <person name="de Montigny J."/>
            <person name="Marck C."/>
            <person name="Neuveglise C."/>
            <person name="Talla E."/>
            <person name="Goffard N."/>
            <person name="Frangeul L."/>
            <person name="Aigle M."/>
            <person name="Anthouard V."/>
            <person name="Babour A."/>
            <person name="Barbe V."/>
            <person name="Barnay S."/>
            <person name="Blanchin S."/>
            <person name="Beckerich J.-M."/>
            <person name="Beyne E."/>
            <person name="Bleykasten C."/>
            <person name="Boisrame A."/>
            <person name="Boyer J."/>
            <person name="Cattolico L."/>
            <person name="Confanioleri F."/>
            <person name="de Daruvar A."/>
            <person name="Despons L."/>
            <person name="Fabre E."/>
            <person name="Fairhead C."/>
            <person name="Ferry-Dumazet H."/>
            <person name="Groppi A."/>
            <person name="Hantraye F."/>
            <person name="Hennequin C."/>
            <person name="Jauniaux N."/>
            <person name="Joyet P."/>
            <person name="Kachouri R."/>
            <person name="Kerrest A."/>
            <person name="Koszul R."/>
            <person name="Lemaire M."/>
            <person name="Lesur I."/>
            <person name="Ma L."/>
            <person name="Muller H."/>
            <person name="Nicaud J.-M."/>
            <person name="Nikolski M."/>
            <person name="Oztas S."/>
            <person name="Ozier-Kalogeropoulos O."/>
            <person name="Pellenz S."/>
            <person name="Potier S."/>
            <person name="Richard G.-F."/>
            <person name="Straub M.-L."/>
            <person name="Suleau A."/>
            <person name="Swennen D."/>
            <person name="Tekaia F."/>
            <person name="Wesolowski-Louvel M."/>
            <person name="Westhof E."/>
            <person name="Wirth B."/>
            <person name="Zeniou-Meyer M."/>
            <person name="Zivanovic Y."/>
            <person name="Bolotin-Fukuhara M."/>
            <person name="Thierry A."/>
            <person name="Bouchier C."/>
            <person name="Caudron B."/>
            <person name="Scarpelli C."/>
            <person name="Gaillardin C."/>
            <person name="Weissenbach J."/>
            <person name="Wincker P."/>
            <person name="Souciet J.-L."/>
        </authorList>
    </citation>
    <scope>NUCLEOTIDE SEQUENCE [LARGE SCALE GENOMIC DNA]</scope>
    <source>
        <strain>ATCC 2001 / BCRC 20586 / JCM 3761 / NBRC 0622 / NRRL Y-65 / CBS 138</strain>
    </source>
</reference>
<sequence length="102" mass="11084">MSSERACMLCGIVQTTNEFGRVGCPNCQGIFEEAGVSTMECTSPSFEGLVGMCKPTKSWVAKWLSVDANIPGMYAVKVDGRLPPEVVELLPHYKPRDGSQVE</sequence>
<gene>
    <name type="primary">SPT4</name>
    <name type="ordered locus">CAGL0K04543g</name>
</gene>
<evidence type="ECO:0000250" key="1"/>
<evidence type="ECO:0000255" key="2"/>
<evidence type="ECO:0000305" key="3"/>
<feature type="chain" id="PRO_0000238548" description="Transcription elongation factor SPT4">
    <location>
        <begin position="1"/>
        <end position="102"/>
    </location>
</feature>
<feature type="zinc finger region" description="C4-type" evidence="2">
    <location>
        <begin position="7"/>
        <end position="27"/>
    </location>
</feature>
<proteinExistence type="inferred from homology"/>
<name>SPT4_CANGA</name>
<organism>
    <name type="scientific">Candida glabrata (strain ATCC 2001 / BCRC 20586 / JCM 3761 / NBRC 0622 / NRRL Y-65 / CBS 138)</name>
    <name type="common">Yeast</name>
    <name type="synonym">Nakaseomyces glabratus</name>
    <dbReference type="NCBI Taxonomy" id="284593"/>
    <lineage>
        <taxon>Eukaryota</taxon>
        <taxon>Fungi</taxon>
        <taxon>Dikarya</taxon>
        <taxon>Ascomycota</taxon>
        <taxon>Saccharomycotina</taxon>
        <taxon>Saccharomycetes</taxon>
        <taxon>Saccharomycetales</taxon>
        <taxon>Saccharomycetaceae</taxon>
        <taxon>Nakaseomyces</taxon>
    </lineage>
</organism>
<keyword id="KW-0137">Centromere</keyword>
<keyword id="KW-0158">Chromosome</keyword>
<keyword id="KW-0479">Metal-binding</keyword>
<keyword id="KW-0507">mRNA processing</keyword>
<keyword id="KW-0539">Nucleus</keyword>
<keyword id="KW-1185">Reference proteome</keyword>
<keyword id="KW-0804">Transcription</keyword>
<keyword id="KW-0862">Zinc</keyword>
<keyword id="KW-0863">Zinc-finger</keyword>